<comment type="function">
    <text evidence="1">Single strand-specific metallo-endoribonuclease involved in late-stage 70S ribosome quality control and in maturation of the 3' terminus of the 16S rRNA.</text>
</comment>
<comment type="cofactor">
    <cofactor evidence="1">
        <name>Zn(2+)</name>
        <dbReference type="ChEBI" id="CHEBI:29105"/>
    </cofactor>
    <text evidence="1">Binds 1 zinc ion.</text>
</comment>
<comment type="subcellular location">
    <subcellularLocation>
        <location evidence="1">Cytoplasm</location>
    </subcellularLocation>
</comment>
<comment type="similarity">
    <text evidence="1">Belongs to the endoribonuclease YbeY family.</text>
</comment>
<gene>
    <name evidence="1" type="primary">ybeY</name>
    <name type="ordered locus">Helmi_23730</name>
    <name type="ORF">HM1_2448</name>
</gene>
<reference key="1">
    <citation type="journal article" date="2008" name="J. Bacteriol.">
        <title>The genome of Heliobacterium modesticaldum, a phototrophic representative of the Firmicutes containing the simplest photosynthetic apparatus.</title>
        <authorList>
            <person name="Sattley W.M."/>
            <person name="Madigan M.T."/>
            <person name="Swingley W.D."/>
            <person name="Cheung P.C."/>
            <person name="Clocksin K.M."/>
            <person name="Conrad A.L."/>
            <person name="Dejesa L.C."/>
            <person name="Honchak B.M."/>
            <person name="Jung D.O."/>
            <person name="Karbach L.E."/>
            <person name="Kurdoglu A."/>
            <person name="Lahiri S."/>
            <person name="Mastrian S.D."/>
            <person name="Page L.E."/>
            <person name="Taylor H.L."/>
            <person name="Wang Z.T."/>
            <person name="Raymond J."/>
            <person name="Chen M."/>
            <person name="Blankenship R.E."/>
            <person name="Touchman J.W."/>
        </authorList>
    </citation>
    <scope>NUCLEOTIDE SEQUENCE [LARGE SCALE GENOMIC DNA]</scope>
    <source>
        <strain>ATCC 51547 / Ice1</strain>
    </source>
</reference>
<name>YBEY_HELMI</name>
<dbReference type="EC" id="3.1.-.-" evidence="1"/>
<dbReference type="EMBL" id="CP000930">
    <property type="protein sequence ID" value="ABZ84998.1"/>
    <property type="molecule type" value="Genomic_DNA"/>
</dbReference>
<dbReference type="RefSeq" id="WP_012283495.1">
    <property type="nucleotide sequence ID" value="NC_010337.2"/>
</dbReference>
<dbReference type="SMR" id="B0TAE8"/>
<dbReference type="STRING" id="498761.HM1_2448"/>
<dbReference type="KEGG" id="hmo:HM1_2448"/>
<dbReference type="eggNOG" id="COG0319">
    <property type="taxonomic scope" value="Bacteria"/>
</dbReference>
<dbReference type="HOGENOM" id="CLU_106710_3_0_9"/>
<dbReference type="OrthoDB" id="9807740at2"/>
<dbReference type="Proteomes" id="UP000008550">
    <property type="component" value="Chromosome"/>
</dbReference>
<dbReference type="GO" id="GO:0005737">
    <property type="term" value="C:cytoplasm"/>
    <property type="evidence" value="ECO:0007669"/>
    <property type="project" value="UniProtKB-SubCell"/>
</dbReference>
<dbReference type="GO" id="GO:0004222">
    <property type="term" value="F:metalloendopeptidase activity"/>
    <property type="evidence" value="ECO:0007669"/>
    <property type="project" value="InterPro"/>
</dbReference>
<dbReference type="GO" id="GO:0004521">
    <property type="term" value="F:RNA endonuclease activity"/>
    <property type="evidence" value="ECO:0007669"/>
    <property type="project" value="UniProtKB-UniRule"/>
</dbReference>
<dbReference type="GO" id="GO:0008270">
    <property type="term" value="F:zinc ion binding"/>
    <property type="evidence" value="ECO:0007669"/>
    <property type="project" value="UniProtKB-UniRule"/>
</dbReference>
<dbReference type="GO" id="GO:0006364">
    <property type="term" value="P:rRNA processing"/>
    <property type="evidence" value="ECO:0007669"/>
    <property type="project" value="UniProtKB-UniRule"/>
</dbReference>
<dbReference type="Gene3D" id="3.40.390.30">
    <property type="entry name" value="Metalloproteases ('zincins'), catalytic domain"/>
    <property type="match status" value="1"/>
</dbReference>
<dbReference type="HAMAP" id="MF_00009">
    <property type="entry name" value="Endoribonucl_YbeY"/>
    <property type="match status" value="1"/>
</dbReference>
<dbReference type="InterPro" id="IPR023091">
    <property type="entry name" value="MetalPrtase_cat_dom_sf_prd"/>
</dbReference>
<dbReference type="InterPro" id="IPR002036">
    <property type="entry name" value="YbeY"/>
</dbReference>
<dbReference type="InterPro" id="IPR020549">
    <property type="entry name" value="YbeY_CS"/>
</dbReference>
<dbReference type="NCBIfam" id="TIGR00043">
    <property type="entry name" value="rRNA maturation RNase YbeY"/>
    <property type="match status" value="1"/>
</dbReference>
<dbReference type="PANTHER" id="PTHR46986">
    <property type="entry name" value="ENDORIBONUCLEASE YBEY, CHLOROPLASTIC"/>
    <property type="match status" value="1"/>
</dbReference>
<dbReference type="PANTHER" id="PTHR46986:SF1">
    <property type="entry name" value="ENDORIBONUCLEASE YBEY, CHLOROPLASTIC"/>
    <property type="match status" value="1"/>
</dbReference>
<dbReference type="Pfam" id="PF02130">
    <property type="entry name" value="YbeY"/>
    <property type="match status" value="1"/>
</dbReference>
<dbReference type="SUPFAM" id="SSF55486">
    <property type="entry name" value="Metalloproteases ('zincins'), catalytic domain"/>
    <property type="match status" value="1"/>
</dbReference>
<dbReference type="PROSITE" id="PS01306">
    <property type="entry name" value="UPF0054"/>
    <property type="match status" value="1"/>
</dbReference>
<proteinExistence type="inferred from homology"/>
<sequence length="166" mass="19327">MELYIVDEREGVTKAPEMEESWQLMLEQLAFACLEEVGYPLEDTEISLVLTNDEKIRRLNAEYRNIDQPTDVLSFAMEEGLDDEADFHFDDPTAGKVLGDIIISVETAERQAQEYGHSLEREMGFLFVHGMLHLLGYDHCDEEQRSRMRALEEKILRNQGLQREWT</sequence>
<protein>
    <recommendedName>
        <fullName evidence="1">Endoribonuclease YbeY</fullName>
        <ecNumber evidence="1">3.1.-.-</ecNumber>
    </recommendedName>
</protein>
<accession>B0TAE8</accession>
<keyword id="KW-0963">Cytoplasm</keyword>
<keyword id="KW-0255">Endonuclease</keyword>
<keyword id="KW-0378">Hydrolase</keyword>
<keyword id="KW-0479">Metal-binding</keyword>
<keyword id="KW-0540">Nuclease</keyword>
<keyword id="KW-1185">Reference proteome</keyword>
<keyword id="KW-0690">Ribosome biogenesis</keyword>
<keyword id="KW-0698">rRNA processing</keyword>
<keyword id="KW-0862">Zinc</keyword>
<feature type="chain" id="PRO_1000089181" description="Endoribonuclease YbeY">
    <location>
        <begin position="1"/>
        <end position="166"/>
    </location>
</feature>
<feature type="binding site" evidence="1">
    <location>
        <position position="129"/>
    </location>
    <ligand>
        <name>Zn(2+)</name>
        <dbReference type="ChEBI" id="CHEBI:29105"/>
        <note>catalytic</note>
    </ligand>
</feature>
<feature type="binding site" evidence="1">
    <location>
        <position position="133"/>
    </location>
    <ligand>
        <name>Zn(2+)</name>
        <dbReference type="ChEBI" id="CHEBI:29105"/>
        <note>catalytic</note>
    </ligand>
</feature>
<feature type="binding site" evidence="1">
    <location>
        <position position="139"/>
    </location>
    <ligand>
        <name>Zn(2+)</name>
        <dbReference type="ChEBI" id="CHEBI:29105"/>
        <note>catalytic</note>
    </ligand>
</feature>
<organism>
    <name type="scientific">Heliobacterium modesticaldum (strain ATCC 51547 / Ice1)</name>
    <dbReference type="NCBI Taxonomy" id="498761"/>
    <lineage>
        <taxon>Bacteria</taxon>
        <taxon>Bacillati</taxon>
        <taxon>Bacillota</taxon>
        <taxon>Clostridia</taxon>
        <taxon>Eubacteriales</taxon>
        <taxon>Heliobacteriaceae</taxon>
        <taxon>Heliomicrobium</taxon>
    </lineage>
</organism>
<evidence type="ECO:0000255" key="1">
    <source>
        <dbReference type="HAMAP-Rule" id="MF_00009"/>
    </source>
</evidence>